<dbReference type="EC" id="2.4.2.7" evidence="1"/>
<dbReference type="EMBL" id="CP001217">
    <property type="protein sequence ID" value="ACJ07732.1"/>
    <property type="molecule type" value="Genomic_DNA"/>
</dbReference>
<dbReference type="SMR" id="B6JLF4"/>
<dbReference type="KEGG" id="hpp:HPP12_0578"/>
<dbReference type="HOGENOM" id="CLU_063339_3_0_7"/>
<dbReference type="UniPathway" id="UPA00588">
    <property type="reaction ID" value="UER00646"/>
</dbReference>
<dbReference type="Proteomes" id="UP000008198">
    <property type="component" value="Chromosome"/>
</dbReference>
<dbReference type="GO" id="GO:0005737">
    <property type="term" value="C:cytoplasm"/>
    <property type="evidence" value="ECO:0007669"/>
    <property type="project" value="UniProtKB-SubCell"/>
</dbReference>
<dbReference type="GO" id="GO:0002055">
    <property type="term" value="F:adenine binding"/>
    <property type="evidence" value="ECO:0007669"/>
    <property type="project" value="TreeGrafter"/>
</dbReference>
<dbReference type="GO" id="GO:0003999">
    <property type="term" value="F:adenine phosphoribosyltransferase activity"/>
    <property type="evidence" value="ECO:0007669"/>
    <property type="project" value="UniProtKB-UniRule"/>
</dbReference>
<dbReference type="GO" id="GO:0016208">
    <property type="term" value="F:AMP binding"/>
    <property type="evidence" value="ECO:0007669"/>
    <property type="project" value="TreeGrafter"/>
</dbReference>
<dbReference type="GO" id="GO:0006168">
    <property type="term" value="P:adenine salvage"/>
    <property type="evidence" value="ECO:0007669"/>
    <property type="project" value="InterPro"/>
</dbReference>
<dbReference type="GO" id="GO:0044209">
    <property type="term" value="P:AMP salvage"/>
    <property type="evidence" value="ECO:0007669"/>
    <property type="project" value="UniProtKB-UniRule"/>
</dbReference>
<dbReference type="GO" id="GO:0006166">
    <property type="term" value="P:purine ribonucleoside salvage"/>
    <property type="evidence" value="ECO:0007669"/>
    <property type="project" value="UniProtKB-KW"/>
</dbReference>
<dbReference type="CDD" id="cd06223">
    <property type="entry name" value="PRTases_typeI"/>
    <property type="match status" value="1"/>
</dbReference>
<dbReference type="FunFam" id="3.40.50.2020:FF:000021">
    <property type="entry name" value="Adenine phosphoribosyltransferase"/>
    <property type="match status" value="1"/>
</dbReference>
<dbReference type="Gene3D" id="3.40.50.2020">
    <property type="match status" value="1"/>
</dbReference>
<dbReference type="HAMAP" id="MF_00004">
    <property type="entry name" value="Aden_phosphoribosyltr"/>
    <property type="match status" value="1"/>
</dbReference>
<dbReference type="InterPro" id="IPR005764">
    <property type="entry name" value="Ade_phspho_trans"/>
</dbReference>
<dbReference type="InterPro" id="IPR000836">
    <property type="entry name" value="PRibTrfase_dom"/>
</dbReference>
<dbReference type="InterPro" id="IPR029057">
    <property type="entry name" value="PRTase-like"/>
</dbReference>
<dbReference type="InterPro" id="IPR050054">
    <property type="entry name" value="UPRTase/APRTase"/>
</dbReference>
<dbReference type="NCBIfam" id="TIGR01090">
    <property type="entry name" value="apt"/>
    <property type="match status" value="1"/>
</dbReference>
<dbReference type="NCBIfam" id="NF002634">
    <property type="entry name" value="PRK02304.1-3"/>
    <property type="match status" value="1"/>
</dbReference>
<dbReference type="NCBIfam" id="NF002636">
    <property type="entry name" value="PRK02304.1-5"/>
    <property type="match status" value="1"/>
</dbReference>
<dbReference type="PANTHER" id="PTHR32315">
    <property type="entry name" value="ADENINE PHOSPHORIBOSYLTRANSFERASE"/>
    <property type="match status" value="1"/>
</dbReference>
<dbReference type="PANTHER" id="PTHR32315:SF3">
    <property type="entry name" value="ADENINE PHOSPHORIBOSYLTRANSFERASE"/>
    <property type="match status" value="1"/>
</dbReference>
<dbReference type="Pfam" id="PF00156">
    <property type="entry name" value="Pribosyltran"/>
    <property type="match status" value="1"/>
</dbReference>
<dbReference type="SUPFAM" id="SSF53271">
    <property type="entry name" value="PRTase-like"/>
    <property type="match status" value="1"/>
</dbReference>
<dbReference type="PROSITE" id="PS00103">
    <property type="entry name" value="PUR_PYR_PR_TRANSFER"/>
    <property type="match status" value="1"/>
</dbReference>
<name>APT_HELP2</name>
<sequence>MNETLKEELLQSIREVKDYPKKGILFKDITTLLNYPKLFNKLIDALKKRYLALNIDFIVGIEARGFILGSALAYALGVGFVPVRKKGKLPAHTLSQSYSLEYGSDSIEIHSDAFRGVKGVRVVLIDDLLATGGTALASLELIKALQAECIEACFLIGLKELPGIQLLEERVKTFCLLEC</sequence>
<accession>B6JLF4</accession>
<organism>
    <name type="scientific">Helicobacter pylori (strain P12)</name>
    <dbReference type="NCBI Taxonomy" id="570508"/>
    <lineage>
        <taxon>Bacteria</taxon>
        <taxon>Pseudomonadati</taxon>
        <taxon>Campylobacterota</taxon>
        <taxon>Epsilonproteobacteria</taxon>
        <taxon>Campylobacterales</taxon>
        <taxon>Helicobacteraceae</taxon>
        <taxon>Helicobacter</taxon>
    </lineage>
</organism>
<keyword id="KW-0963">Cytoplasm</keyword>
<keyword id="KW-0328">Glycosyltransferase</keyword>
<keyword id="KW-0660">Purine salvage</keyword>
<keyword id="KW-0808">Transferase</keyword>
<reference key="1">
    <citation type="submission" date="2008-10" db="EMBL/GenBank/DDBJ databases">
        <title>The complete genome sequence of Helicobacter pylori strain P12.</title>
        <authorList>
            <person name="Fischer W."/>
            <person name="Windhager L."/>
            <person name="Karnholz A."/>
            <person name="Zeiller M."/>
            <person name="Zimmer R."/>
            <person name="Haas R."/>
        </authorList>
    </citation>
    <scope>NUCLEOTIDE SEQUENCE [LARGE SCALE GENOMIC DNA]</scope>
    <source>
        <strain>P12</strain>
    </source>
</reference>
<comment type="function">
    <text evidence="1">Catalyzes a salvage reaction resulting in the formation of AMP, that is energically less costly than de novo synthesis.</text>
</comment>
<comment type="catalytic activity">
    <reaction evidence="1">
        <text>AMP + diphosphate = 5-phospho-alpha-D-ribose 1-diphosphate + adenine</text>
        <dbReference type="Rhea" id="RHEA:16609"/>
        <dbReference type="ChEBI" id="CHEBI:16708"/>
        <dbReference type="ChEBI" id="CHEBI:33019"/>
        <dbReference type="ChEBI" id="CHEBI:58017"/>
        <dbReference type="ChEBI" id="CHEBI:456215"/>
        <dbReference type="EC" id="2.4.2.7"/>
    </reaction>
</comment>
<comment type="pathway">
    <text evidence="1">Purine metabolism; AMP biosynthesis via salvage pathway; AMP from adenine: step 1/1.</text>
</comment>
<comment type="subunit">
    <text evidence="1">Homodimer.</text>
</comment>
<comment type="subcellular location">
    <subcellularLocation>
        <location evidence="1">Cytoplasm</location>
    </subcellularLocation>
</comment>
<comment type="similarity">
    <text evidence="1">Belongs to the purine/pyrimidine phosphoribosyltransferase family.</text>
</comment>
<protein>
    <recommendedName>
        <fullName evidence="1">Adenine phosphoribosyltransferase</fullName>
        <shortName evidence="1">APRT</shortName>
        <ecNumber evidence="1">2.4.2.7</ecNumber>
    </recommendedName>
</protein>
<evidence type="ECO:0000255" key="1">
    <source>
        <dbReference type="HAMAP-Rule" id="MF_00004"/>
    </source>
</evidence>
<proteinExistence type="inferred from homology"/>
<gene>
    <name evidence="1" type="primary">apt</name>
    <name type="ordered locus">HPP12_0578</name>
</gene>
<feature type="chain" id="PRO_1000088978" description="Adenine phosphoribosyltransferase">
    <location>
        <begin position="1"/>
        <end position="179"/>
    </location>
</feature>